<proteinExistence type="inferred from homology"/>
<keyword id="KW-0150">Chloroplast</keyword>
<keyword id="KW-0472">Membrane</keyword>
<keyword id="KW-0602">Photosynthesis</keyword>
<keyword id="KW-0604">Photosystem II</keyword>
<keyword id="KW-0934">Plastid</keyword>
<keyword id="KW-0674">Reaction center</keyword>
<keyword id="KW-0793">Thylakoid</keyword>
<keyword id="KW-0812">Transmembrane</keyword>
<keyword id="KW-1133">Transmembrane helix</keyword>
<evidence type="ECO:0000255" key="1">
    <source>
        <dbReference type="HAMAP-Rule" id="MF_01316"/>
    </source>
</evidence>
<dbReference type="EMBL" id="EF380353">
    <property type="protein sequence ID" value="ABR01414.1"/>
    <property type="molecule type" value="Genomic_DNA"/>
</dbReference>
<dbReference type="RefSeq" id="YP_001294336.1">
    <property type="nucleotide sequence ID" value="NC_009601.1"/>
</dbReference>
<dbReference type="SMR" id="A6MMJ1"/>
<dbReference type="GeneID" id="5236655"/>
<dbReference type="GO" id="GO:0009535">
    <property type="term" value="C:chloroplast thylakoid membrane"/>
    <property type="evidence" value="ECO:0007669"/>
    <property type="project" value="UniProtKB-SubCell"/>
</dbReference>
<dbReference type="GO" id="GO:0009539">
    <property type="term" value="C:photosystem II reaction center"/>
    <property type="evidence" value="ECO:0007669"/>
    <property type="project" value="InterPro"/>
</dbReference>
<dbReference type="GO" id="GO:0015979">
    <property type="term" value="P:photosynthesis"/>
    <property type="evidence" value="ECO:0007669"/>
    <property type="project" value="UniProtKB-UniRule"/>
</dbReference>
<dbReference type="HAMAP" id="MF_01316">
    <property type="entry name" value="PSII_PsbI"/>
    <property type="match status" value="1"/>
</dbReference>
<dbReference type="InterPro" id="IPR003686">
    <property type="entry name" value="PSII_PsbI"/>
</dbReference>
<dbReference type="InterPro" id="IPR037271">
    <property type="entry name" value="PSII_PsbI_sf"/>
</dbReference>
<dbReference type="NCBIfam" id="NF002735">
    <property type="entry name" value="PRK02655.1"/>
    <property type="match status" value="1"/>
</dbReference>
<dbReference type="PANTHER" id="PTHR35772">
    <property type="entry name" value="PHOTOSYSTEM II REACTION CENTER PROTEIN I"/>
    <property type="match status" value="1"/>
</dbReference>
<dbReference type="PANTHER" id="PTHR35772:SF1">
    <property type="entry name" value="PHOTOSYSTEM II REACTION CENTER PROTEIN I"/>
    <property type="match status" value="1"/>
</dbReference>
<dbReference type="Pfam" id="PF02532">
    <property type="entry name" value="PsbI"/>
    <property type="match status" value="1"/>
</dbReference>
<dbReference type="SUPFAM" id="SSF161041">
    <property type="entry name" value="Photosystem II reaction center protein I, PsbI"/>
    <property type="match status" value="1"/>
</dbReference>
<geneLocation type="chloroplast"/>
<reference key="1">
    <citation type="journal article" date="2007" name="Mol. Phylogenet. Evol.">
        <title>Phylogenetic and evolutionary implications of complete chloroplast genome sequences of four early-diverging angiosperms: Buxus (Buxaceae), Chloranthus (Chloranthaceae), Dioscorea (Dioscoreaceae), and Illicium (Schisandraceae).</title>
        <authorList>
            <person name="Hansen D.R."/>
            <person name="Dastidar S.G."/>
            <person name="Cai Z."/>
            <person name="Penaflor C."/>
            <person name="Kuehl J.V."/>
            <person name="Boore J.L."/>
            <person name="Jansen R.K."/>
        </authorList>
    </citation>
    <scope>NUCLEOTIDE SEQUENCE [LARGE SCALE GENOMIC DNA]</scope>
</reference>
<feature type="chain" id="PRO_0000353229" description="Photosystem II reaction center protein I">
    <location>
        <begin position="1"/>
        <end position="36"/>
    </location>
</feature>
<feature type="transmembrane region" description="Helical" evidence="1">
    <location>
        <begin position="4"/>
        <end position="24"/>
    </location>
</feature>
<accession>A6MMJ1</accession>
<gene>
    <name evidence="1" type="primary">psbI</name>
</gene>
<name>PSBI_DIOEL</name>
<organism>
    <name type="scientific">Dioscorea elephantipes</name>
    <name type="common">Elephant's foot yam</name>
    <name type="synonym">Testudinaria elephantipes</name>
    <dbReference type="NCBI Taxonomy" id="145284"/>
    <lineage>
        <taxon>Eukaryota</taxon>
        <taxon>Viridiplantae</taxon>
        <taxon>Streptophyta</taxon>
        <taxon>Embryophyta</taxon>
        <taxon>Tracheophyta</taxon>
        <taxon>Spermatophyta</taxon>
        <taxon>Magnoliopsida</taxon>
        <taxon>Liliopsida</taxon>
        <taxon>Dioscoreales</taxon>
        <taxon>Dioscoreaceae</taxon>
        <taxon>Dioscorea</taxon>
    </lineage>
</organism>
<protein>
    <recommendedName>
        <fullName evidence="1">Photosystem II reaction center protein I</fullName>
        <shortName evidence="1">PSII-I</shortName>
    </recommendedName>
    <alternativeName>
        <fullName evidence="1">PSII 4.8 kDa protein</fullName>
    </alternativeName>
</protein>
<comment type="function">
    <text evidence="1">One of the components of the core complex of photosystem II (PSII), required for its stability and/or assembly. PSII is a light-driven water:plastoquinone oxidoreductase that uses light energy to abstract electrons from H(2)O, generating O(2) and a proton gradient subsequently used for ATP formation. It consists of a core antenna complex that captures photons, and an electron transfer chain that converts photonic excitation into a charge separation.</text>
</comment>
<comment type="subunit">
    <text evidence="1">PSII is composed of 1 copy each of membrane proteins PsbA, PsbB, PsbC, PsbD, PsbE, PsbF, PsbH, PsbI, PsbJ, PsbK, PsbL, PsbM, PsbT, PsbX, PsbY, PsbZ, Psb30/Ycf12, at least 3 peripheral proteins of the oxygen-evolving complex and a large number of cofactors. It forms dimeric complexes.</text>
</comment>
<comment type="subcellular location">
    <subcellularLocation>
        <location evidence="1">Plastid</location>
        <location evidence="1">Chloroplast thylakoid membrane</location>
        <topology evidence="1">Single-pass membrane protein</topology>
    </subcellularLocation>
</comment>
<comment type="similarity">
    <text evidence="1">Belongs to the PsbI family.</text>
</comment>
<sequence length="36" mass="4168">MLTLKLFVYTVVIFFVSLFIFGFLSNDPGRNPGREE</sequence>